<protein>
    <recommendedName>
        <fullName>Uncharacterized J domain-containing protein C63.03</fullName>
    </recommendedName>
</protein>
<evidence type="ECO:0000255" key="1"/>
<evidence type="ECO:0000255" key="2">
    <source>
        <dbReference type="PROSITE-ProRule" id="PRU00286"/>
    </source>
</evidence>
<evidence type="ECO:0000305" key="3"/>
<sequence length="612" mass="68788">MDEADSWELYLALGLPKDATSDQIKESYYRLSRLFHPDRHTADQKAAAEEKFQIIQHAYEVLSDPSKKEIYDNFGEQGLKTDWNVGFPGKSAEELKNKIREQIQERDIHEIDSLVQSRSETTIVVNMTPLFARNIRVQNALGLGAGTRMLTPYERFSLIQWVSFQIKSSFSIPTSFSNDLKKPSFNSFSSGSFDDEFSAPSDEDEGNHKTSSRLSIVTEASMRQNSKLQPSIFAVYHSQPSPNLSSEIGFSLLRPGLITVKSVYAINNQTFIVPLIQISGLKRPPQATVVIGRQITRFGTLTARWKTGVWSLGSWGIASPRGANSSFSLTWQQMKAIPNSLVPQLSWNAEVTAGLMYSGIAYNYNLKNATEDSPYQIKLGTSMSTVGGLQVSGDTSRKVGRYSTFGVNISVGVPTGSITFSLNWSRLGQKISLPIMWCSVFDRSAVFWGLVFPITSILGVEQFFLRPRRLSNQKRLRLLRLQKLKDSQERKKVSAIRAVKLMKEIVEKKQKLEMEKGGLVIEYAEYRVVNCGANEPDLKQDVTISIAALVENSRLAIPSSVSKSSIIGIYPLFSDNEKELEIVYTFHQQRHRVVLRDKQGVFLPSREHKILS</sequence>
<keyword id="KW-0143">Chaperone</keyword>
<keyword id="KW-0472">Membrane</keyword>
<keyword id="KW-1185">Reference proteome</keyword>
<keyword id="KW-0812">Transmembrane</keyword>
<keyword id="KW-1133">Transmembrane helix</keyword>
<comment type="subcellular location">
    <subcellularLocation>
        <location evidence="3">Membrane</location>
        <topology evidence="3">Single-pass membrane protein</topology>
    </subcellularLocation>
</comment>
<comment type="similarity">
    <text evidence="3">Belongs to the DnaJ family.</text>
</comment>
<accession>Q9Y7T0</accession>
<organism>
    <name type="scientific">Schizosaccharomyces pombe (strain 972 / ATCC 24843)</name>
    <name type="common">Fission yeast</name>
    <dbReference type="NCBI Taxonomy" id="284812"/>
    <lineage>
        <taxon>Eukaryota</taxon>
        <taxon>Fungi</taxon>
        <taxon>Dikarya</taxon>
        <taxon>Ascomycota</taxon>
        <taxon>Taphrinomycotina</taxon>
        <taxon>Schizosaccharomycetes</taxon>
        <taxon>Schizosaccharomycetales</taxon>
        <taxon>Schizosaccharomycetaceae</taxon>
        <taxon>Schizosaccharomyces</taxon>
    </lineage>
</organism>
<reference key="1">
    <citation type="journal article" date="2002" name="Nature">
        <title>The genome sequence of Schizosaccharomyces pombe.</title>
        <authorList>
            <person name="Wood V."/>
            <person name="Gwilliam R."/>
            <person name="Rajandream M.A."/>
            <person name="Lyne M.H."/>
            <person name="Lyne R."/>
            <person name="Stewart A."/>
            <person name="Sgouros J.G."/>
            <person name="Peat N."/>
            <person name="Hayles J."/>
            <person name="Baker S.G."/>
            <person name="Basham D."/>
            <person name="Bowman S."/>
            <person name="Brooks K."/>
            <person name="Brown D."/>
            <person name="Brown S."/>
            <person name="Chillingworth T."/>
            <person name="Churcher C.M."/>
            <person name="Collins M."/>
            <person name="Connor R."/>
            <person name="Cronin A."/>
            <person name="Davis P."/>
            <person name="Feltwell T."/>
            <person name="Fraser A."/>
            <person name="Gentles S."/>
            <person name="Goble A."/>
            <person name="Hamlin N."/>
            <person name="Harris D.E."/>
            <person name="Hidalgo J."/>
            <person name="Hodgson G."/>
            <person name="Holroyd S."/>
            <person name="Hornsby T."/>
            <person name="Howarth S."/>
            <person name="Huckle E.J."/>
            <person name="Hunt S."/>
            <person name="Jagels K."/>
            <person name="James K.D."/>
            <person name="Jones L."/>
            <person name="Jones M."/>
            <person name="Leather S."/>
            <person name="McDonald S."/>
            <person name="McLean J."/>
            <person name="Mooney P."/>
            <person name="Moule S."/>
            <person name="Mungall K.L."/>
            <person name="Murphy L.D."/>
            <person name="Niblett D."/>
            <person name="Odell C."/>
            <person name="Oliver K."/>
            <person name="O'Neil S."/>
            <person name="Pearson D."/>
            <person name="Quail M.A."/>
            <person name="Rabbinowitsch E."/>
            <person name="Rutherford K.M."/>
            <person name="Rutter S."/>
            <person name="Saunders D."/>
            <person name="Seeger K."/>
            <person name="Sharp S."/>
            <person name="Skelton J."/>
            <person name="Simmonds M.N."/>
            <person name="Squares R."/>
            <person name="Squares S."/>
            <person name="Stevens K."/>
            <person name="Taylor K."/>
            <person name="Taylor R.G."/>
            <person name="Tivey A."/>
            <person name="Walsh S.V."/>
            <person name="Warren T."/>
            <person name="Whitehead S."/>
            <person name="Woodward J.R."/>
            <person name="Volckaert G."/>
            <person name="Aert R."/>
            <person name="Robben J."/>
            <person name="Grymonprez B."/>
            <person name="Weltjens I."/>
            <person name="Vanstreels E."/>
            <person name="Rieger M."/>
            <person name="Schaefer M."/>
            <person name="Mueller-Auer S."/>
            <person name="Gabel C."/>
            <person name="Fuchs M."/>
            <person name="Duesterhoeft A."/>
            <person name="Fritzc C."/>
            <person name="Holzer E."/>
            <person name="Moestl D."/>
            <person name="Hilbert H."/>
            <person name="Borzym K."/>
            <person name="Langer I."/>
            <person name="Beck A."/>
            <person name="Lehrach H."/>
            <person name="Reinhardt R."/>
            <person name="Pohl T.M."/>
            <person name="Eger P."/>
            <person name="Zimmermann W."/>
            <person name="Wedler H."/>
            <person name="Wambutt R."/>
            <person name="Purnelle B."/>
            <person name="Goffeau A."/>
            <person name="Cadieu E."/>
            <person name="Dreano S."/>
            <person name="Gloux S."/>
            <person name="Lelaure V."/>
            <person name="Mottier S."/>
            <person name="Galibert F."/>
            <person name="Aves S.J."/>
            <person name="Xiang Z."/>
            <person name="Hunt C."/>
            <person name="Moore K."/>
            <person name="Hurst S.M."/>
            <person name="Lucas M."/>
            <person name="Rochet M."/>
            <person name="Gaillardin C."/>
            <person name="Tallada V.A."/>
            <person name="Garzon A."/>
            <person name="Thode G."/>
            <person name="Daga R.R."/>
            <person name="Cruzado L."/>
            <person name="Jimenez J."/>
            <person name="Sanchez M."/>
            <person name="del Rey F."/>
            <person name="Benito J."/>
            <person name="Dominguez A."/>
            <person name="Revuelta J.L."/>
            <person name="Moreno S."/>
            <person name="Armstrong J."/>
            <person name="Forsburg S.L."/>
            <person name="Cerutti L."/>
            <person name="Lowe T."/>
            <person name="McCombie W.R."/>
            <person name="Paulsen I."/>
            <person name="Potashkin J."/>
            <person name="Shpakovski G.V."/>
            <person name="Ussery D."/>
            <person name="Barrell B.G."/>
            <person name="Nurse P."/>
        </authorList>
    </citation>
    <scope>NUCLEOTIDE SEQUENCE [LARGE SCALE GENOMIC DNA]</scope>
    <source>
        <strain>972 / ATCC 24843</strain>
    </source>
</reference>
<reference key="2">
    <citation type="journal article" date="2011" name="Science">
        <title>Comparative functional genomics of the fission yeasts.</title>
        <authorList>
            <person name="Rhind N."/>
            <person name="Chen Z."/>
            <person name="Yassour M."/>
            <person name="Thompson D.A."/>
            <person name="Haas B.J."/>
            <person name="Habib N."/>
            <person name="Wapinski I."/>
            <person name="Roy S."/>
            <person name="Lin M.F."/>
            <person name="Heiman D.I."/>
            <person name="Young S.K."/>
            <person name="Furuya K."/>
            <person name="Guo Y."/>
            <person name="Pidoux A."/>
            <person name="Chen H.M."/>
            <person name="Robbertse B."/>
            <person name="Goldberg J.M."/>
            <person name="Aoki K."/>
            <person name="Bayne E.H."/>
            <person name="Berlin A.M."/>
            <person name="Desjardins C.A."/>
            <person name="Dobbs E."/>
            <person name="Dukaj L."/>
            <person name="Fan L."/>
            <person name="FitzGerald M.G."/>
            <person name="French C."/>
            <person name="Gujja S."/>
            <person name="Hansen K."/>
            <person name="Keifenheim D."/>
            <person name="Levin J.Z."/>
            <person name="Mosher R.A."/>
            <person name="Mueller C.A."/>
            <person name="Pfiffner J."/>
            <person name="Priest M."/>
            <person name="Russ C."/>
            <person name="Smialowska A."/>
            <person name="Swoboda P."/>
            <person name="Sykes S.M."/>
            <person name="Vaughn M."/>
            <person name="Vengrova S."/>
            <person name="Yoder R."/>
            <person name="Zeng Q."/>
            <person name="Allshire R."/>
            <person name="Baulcombe D."/>
            <person name="Birren B.W."/>
            <person name="Brown W."/>
            <person name="Ekwall K."/>
            <person name="Kellis M."/>
            <person name="Leatherwood J."/>
            <person name="Levin H."/>
            <person name="Margalit H."/>
            <person name="Martienssen R."/>
            <person name="Nieduszynski C.A."/>
            <person name="Spatafora J.W."/>
            <person name="Friedman N."/>
            <person name="Dalgaard J.Z."/>
            <person name="Baumann P."/>
            <person name="Niki H."/>
            <person name="Regev A."/>
            <person name="Nusbaum C."/>
        </authorList>
    </citation>
    <scope>REVISION OF GENE MODEL</scope>
</reference>
<gene>
    <name type="ORF">SPCC63.03</name>
</gene>
<feature type="chain" id="PRO_0000310354" description="Uncharacterized J domain-containing protein C63.03">
    <location>
        <begin position="1"/>
        <end position="612"/>
    </location>
</feature>
<feature type="transmembrane region" description="Helical" evidence="1">
    <location>
        <begin position="445"/>
        <end position="465"/>
    </location>
</feature>
<feature type="domain" description="J" evidence="2">
    <location>
        <begin position="8"/>
        <end position="75"/>
    </location>
</feature>
<dbReference type="EMBL" id="CU329672">
    <property type="protein sequence ID" value="CAB40007.2"/>
    <property type="molecule type" value="Genomic_DNA"/>
</dbReference>
<dbReference type="PIR" id="T41504">
    <property type="entry name" value="T41504"/>
</dbReference>
<dbReference type="SMR" id="Q9Y7T0"/>
<dbReference type="BioGRID" id="276143">
    <property type="interactions" value="12"/>
</dbReference>
<dbReference type="FunCoup" id="Q9Y7T0">
    <property type="interactions" value="305"/>
</dbReference>
<dbReference type="STRING" id="284812.Q9Y7T0"/>
<dbReference type="iPTMnet" id="Q9Y7T0"/>
<dbReference type="PaxDb" id="4896-SPCC63.03.1"/>
<dbReference type="EnsemblFungi" id="SPCC63.03.1">
    <property type="protein sequence ID" value="SPCC63.03.1:pep"/>
    <property type="gene ID" value="SPCC63.03"/>
</dbReference>
<dbReference type="KEGG" id="spo:2539584"/>
<dbReference type="PomBase" id="SPCC63.03"/>
<dbReference type="VEuPathDB" id="FungiDB:SPCC63.03"/>
<dbReference type="eggNOG" id="KOG0718">
    <property type="taxonomic scope" value="Eukaryota"/>
</dbReference>
<dbReference type="HOGENOM" id="CLU_019611_0_1_1"/>
<dbReference type="InParanoid" id="Q9Y7T0"/>
<dbReference type="OMA" id="QLDKHTM"/>
<dbReference type="PRO" id="PR:Q9Y7T0"/>
<dbReference type="Proteomes" id="UP000002485">
    <property type="component" value="Chromosome III"/>
</dbReference>
<dbReference type="GO" id="GO:0140275">
    <property type="term" value="C:MIB complex"/>
    <property type="evidence" value="ECO:0000250"/>
    <property type="project" value="PomBase"/>
</dbReference>
<dbReference type="GO" id="GO:0042407">
    <property type="term" value="P:cristae formation"/>
    <property type="evidence" value="ECO:0000318"/>
    <property type="project" value="GO_Central"/>
</dbReference>
<dbReference type="CDD" id="cd06257">
    <property type="entry name" value="DnaJ"/>
    <property type="match status" value="1"/>
</dbReference>
<dbReference type="Gene3D" id="1.10.287.110">
    <property type="entry name" value="DnaJ domain"/>
    <property type="match status" value="1"/>
</dbReference>
<dbReference type="InterPro" id="IPR024586">
    <property type="entry name" value="DnaJ-like_C11_C"/>
</dbReference>
<dbReference type="InterPro" id="IPR001623">
    <property type="entry name" value="DnaJ_domain"/>
</dbReference>
<dbReference type="InterPro" id="IPR018253">
    <property type="entry name" value="DnaJ_domain_CS"/>
</dbReference>
<dbReference type="InterPro" id="IPR055225">
    <property type="entry name" value="DNAJC11-like_beta-barrel"/>
</dbReference>
<dbReference type="InterPro" id="IPR036869">
    <property type="entry name" value="J_dom_sf"/>
</dbReference>
<dbReference type="InterPro" id="IPR052243">
    <property type="entry name" value="Mito_inner_membrane_organizer"/>
</dbReference>
<dbReference type="PANTHER" id="PTHR44157">
    <property type="entry name" value="DNAJ HOMOLOG SUBFAMILY C MEMBER 11"/>
    <property type="match status" value="1"/>
</dbReference>
<dbReference type="PANTHER" id="PTHR44157:SF1">
    <property type="entry name" value="DNAJ HOMOLOG SUBFAMILY C MEMBER 11"/>
    <property type="match status" value="1"/>
</dbReference>
<dbReference type="Pfam" id="PF00226">
    <property type="entry name" value="DnaJ"/>
    <property type="match status" value="1"/>
</dbReference>
<dbReference type="Pfam" id="PF11875">
    <property type="entry name" value="DnaJ-like_C11_C"/>
    <property type="match status" value="1"/>
</dbReference>
<dbReference type="Pfam" id="PF22774">
    <property type="entry name" value="DNAJC11_beta-barrel"/>
    <property type="match status" value="1"/>
</dbReference>
<dbReference type="PRINTS" id="PR00625">
    <property type="entry name" value="JDOMAIN"/>
</dbReference>
<dbReference type="SMART" id="SM00271">
    <property type="entry name" value="DnaJ"/>
    <property type="match status" value="1"/>
</dbReference>
<dbReference type="SUPFAM" id="SSF46565">
    <property type="entry name" value="Chaperone J-domain"/>
    <property type="match status" value="1"/>
</dbReference>
<dbReference type="PROSITE" id="PS00636">
    <property type="entry name" value="DNAJ_1"/>
    <property type="match status" value="1"/>
</dbReference>
<dbReference type="PROSITE" id="PS50076">
    <property type="entry name" value="DNAJ_2"/>
    <property type="match status" value="1"/>
</dbReference>
<name>YCJ3_SCHPO</name>
<proteinExistence type="inferred from homology"/>